<reference key="1">
    <citation type="journal article" date="2008" name="Mol. Cell. Proteomics">
        <title>Evolution of an arsenal: structural and functional diversification of the venom system in the advanced snakes (Caenophidia).</title>
        <authorList>
            <person name="Fry B.G."/>
            <person name="Scheib H."/>
            <person name="van der Weerd L."/>
            <person name="Young B."/>
            <person name="McNaughtan J."/>
            <person name="Ramjan S.F.R."/>
            <person name="Vidal N."/>
            <person name="Poelmann R.E."/>
            <person name="Norman J.A."/>
        </authorList>
    </citation>
    <scope>NUCLEOTIDE SEQUENCE [LARGE SCALE MRNA]</scope>
    <source>
        <tissue>Venom gland</tissue>
    </source>
</reference>
<name>3L2O2_OXYMI</name>
<dbReference type="EMBL" id="EU029750">
    <property type="protein sequence ID" value="ABU68550.1"/>
    <property type="molecule type" value="mRNA"/>
</dbReference>
<dbReference type="SMR" id="A7X4R0"/>
<dbReference type="GO" id="GO:0005576">
    <property type="term" value="C:extracellular region"/>
    <property type="evidence" value="ECO:0007669"/>
    <property type="project" value="UniProtKB-SubCell"/>
</dbReference>
<dbReference type="GO" id="GO:0030550">
    <property type="term" value="F:acetylcholine receptor inhibitor activity"/>
    <property type="evidence" value="ECO:0007669"/>
    <property type="project" value="UniProtKB-KW"/>
</dbReference>
<dbReference type="GO" id="GO:0099106">
    <property type="term" value="F:ion channel regulator activity"/>
    <property type="evidence" value="ECO:0007669"/>
    <property type="project" value="UniProtKB-KW"/>
</dbReference>
<dbReference type="GO" id="GO:0090729">
    <property type="term" value="F:toxin activity"/>
    <property type="evidence" value="ECO:0007669"/>
    <property type="project" value="UniProtKB-KW"/>
</dbReference>
<dbReference type="CDD" id="cd00206">
    <property type="entry name" value="TFP_snake_toxin"/>
    <property type="match status" value="1"/>
</dbReference>
<dbReference type="Gene3D" id="2.10.60.10">
    <property type="entry name" value="CD59"/>
    <property type="match status" value="1"/>
</dbReference>
<dbReference type="InterPro" id="IPR003571">
    <property type="entry name" value="Snake_3FTx"/>
</dbReference>
<dbReference type="InterPro" id="IPR045860">
    <property type="entry name" value="Snake_toxin-like_sf"/>
</dbReference>
<dbReference type="InterPro" id="IPR018354">
    <property type="entry name" value="Snake_toxin_con_site"/>
</dbReference>
<dbReference type="InterPro" id="IPR054131">
    <property type="entry name" value="Toxin_cobra-type"/>
</dbReference>
<dbReference type="Pfam" id="PF21947">
    <property type="entry name" value="Toxin_cobra-type"/>
    <property type="match status" value="1"/>
</dbReference>
<dbReference type="SUPFAM" id="SSF57302">
    <property type="entry name" value="Snake toxin-like"/>
    <property type="match status" value="1"/>
</dbReference>
<dbReference type="PROSITE" id="PS00272">
    <property type="entry name" value="SNAKE_TOXIN"/>
    <property type="match status" value="1"/>
</dbReference>
<comment type="function">
    <text evidence="2">Binds with high affinity to muscular (alpha-1/CHRNA1) and neuronal (alpha-7/CHRNA7) nicotinic acetylcholine receptor (nAChR) and inhibits acetylcholine from binding to the receptor, thereby impairing neuromuscular and neuronal transmission.</text>
</comment>
<comment type="subcellular location">
    <subcellularLocation>
        <location evidence="1">Secreted</location>
    </subcellularLocation>
</comment>
<comment type="tissue specificity">
    <text evidence="3">Expressed by the venom gland.</text>
</comment>
<comment type="similarity">
    <text evidence="3">Belongs to the three-finger toxin family. Long-chain subfamily. Type II alpha-neurotoxin sub-subfamily.</text>
</comment>
<evidence type="ECO:0000250" key="1"/>
<evidence type="ECO:0000250" key="2">
    <source>
        <dbReference type="UniProtKB" id="P60615"/>
    </source>
</evidence>
<evidence type="ECO:0000305" key="3"/>
<sequence length="92" mass="10198">MKTLLLTLVVVTIVCLDLGYTRRCFTTPSVRSERCPPGQEVCYTKTWTDGHGGSRGKRVDLGCAATCPTPKKKDIKTICCSKDNCNTFPKWP</sequence>
<protein>
    <recommendedName>
        <fullName>Long neurotoxin 3FTx-Oxy2</fullName>
    </recommendedName>
</protein>
<organism>
    <name type="scientific">Oxyuranus microlepidotus</name>
    <name type="common">Inland taipan</name>
    <name type="synonym">Diemenia microlepidota</name>
    <dbReference type="NCBI Taxonomy" id="111177"/>
    <lineage>
        <taxon>Eukaryota</taxon>
        <taxon>Metazoa</taxon>
        <taxon>Chordata</taxon>
        <taxon>Craniata</taxon>
        <taxon>Vertebrata</taxon>
        <taxon>Euteleostomi</taxon>
        <taxon>Lepidosauria</taxon>
        <taxon>Squamata</taxon>
        <taxon>Bifurcata</taxon>
        <taxon>Unidentata</taxon>
        <taxon>Episquamata</taxon>
        <taxon>Toxicofera</taxon>
        <taxon>Serpentes</taxon>
        <taxon>Colubroidea</taxon>
        <taxon>Elapidae</taxon>
        <taxon>Hydrophiinae</taxon>
        <taxon>Oxyuranus</taxon>
    </lineage>
</organism>
<proteinExistence type="inferred from homology"/>
<feature type="signal peptide" evidence="1">
    <location>
        <begin position="1"/>
        <end position="21"/>
    </location>
</feature>
<feature type="chain" id="PRO_0000316168" description="Long neurotoxin 3FTx-Oxy2">
    <location>
        <begin position="22"/>
        <end position="92"/>
    </location>
</feature>
<feature type="disulfide bond" evidence="1">
    <location>
        <begin position="24"/>
        <end position="42"/>
    </location>
</feature>
<feature type="disulfide bond" evidence="1">
    <location>
        <begin position="35"/>
        <end position="63"/>
    </location>
</feature>
<feature type="disulfide bond" evidence="1">
    <location>
        <begin position="67"/>
        <end position="79"/>
    </location>
</feature>
<feature type="disulfide bond" evidence="1">
    <location>
        <begin position="80"/>
        <end position="85"/>
    </location>
</feature>
<keyword id="KW-0008">Acetylcholine receptor inhibiting toxin</keyword>
<keyword id="KW-1015">Disulfide bond</keyword>
<keyword id="KW-0872">Ion channel impairing toxin</keyword>
<keyword id="KW-0528">Neurotoxin</keyword>
<keyword id="KW-0629">Postsynaptic neurotoxin</keyword>
<keyword id="KW-0964">Secreted</keyword>
<keyword id="KW-0732">Signal</keyword>
<keyword id="KW-0800">Toxin</keyword>
<accession>A7X4R0</accession>